<organism>
    <name type="scientific">Xanthomonas euvesicatoria pv. vesicatoria (strain 85-10)</name>
    <name type="common">Xanthomonas campestris pv. vesicatoria</name>
    <dbReference type="NCBI Taxonomy" id="316273"/>
    <lineage>
        <taxon>Bacteria</taxon>
        <taxon>Pseudomonadati</taxon>
        <taxon>Pseudomonadota</taxon>
        <taxon>Gammaproteobacteria</taxon>
        <taxon>Lysobacterales</taxon>
        <taxon>Lysobacteraceae</taxon>
        <taxon>Xanthomonas</taxon>
    </lineage>
</organism>
<accession>Q3BUF7</accession>
<comment type="function">
    <text evidence="1">Catalyzes the sequential NAD-dependent oxidations of L-histidinol to L-histidinaldehyde and then to L-histidine.</text>
</comment>
<comment type="catalytic activity">
    <reaction evidence="1">
        <text>L-histidinol + 2 NAD(+) + H2O = L-histidine + 2 NADH + 3 H(+)</text>
        <dbReference type="Rhea" id="RHEA:20641"/>
        <dbReference type="ChEBI" id="CHEBI:15377"/>
        <dbReference type="ChEBI" id="CHEBI:15378"/>
        <dbReference type="ChEBI" id="CHEBI:57540"/>
        <dbReference type="ChEBI" id="CHEBI:57595"/>
        <dbReference type="ChEBI" id="CHEBI:57699"/>
        <dbReference type="ChEBI" id="CHEBI:57945"/>
        <dbReference type="EC" id="1.1.1.23"/>
    </reaction>
</comment>
<comment type="cofactor">
    <cofactor evidence="1">
        <name>Zn(2+)</name>
        <dbReference type="ChEBI" id="CHEBI:29105"/>
    </cofactor>
    <text evidence="1">Binds 1 zinc ion per subunit.</text>
</comment>
<comment type="pathway">
    <text evidence="1">Amino-acid biosynthesis; L-histidine biosynthesis; L-histidine from 5-phospho-alpha-D-ribose 1-diphosphate: step 9/9.</text>
</comment>
<comment type="similarity">
    <text evidence="1">Belongs to the histidinol dehydrogenase family.</text>
</comment>
<protein>
    <recommendedName>
        <fullName evidence="1">Histidinol dehydrogenase</fullName>
        <shortName evidence="1">HDH</shortName>
        <ecNumber evidence="1">1.1.1.23</ecNumber>
    </recommendedName>
</protein>
<gene>
    <name evidence="1" type="primary">hisD</name>
    <name type="ordered locus">XCV1875</name>
</gene>
<keyword id="KW-0028">Amino-acid biosynthesis</keyword>
<keyword id="KW-0368">Histidine biosynthesis</keyword>
<keyword id="KW-0479">Metal-binding</keyword>
<keyword id="KW-0520">NAD</keyword>
<keyword id="KW-0560">Oxidoreductase</keyword>
<keyword id="KW-0862">Zinc</keyword>
<name>HISX_XANE5</name>
<sequence>MKILDWSQLDGAARTDALTRPVQTVATQTRDAVAALIADVRARGDAALREITARFDGVSLESFAVSEADFAAAEAAVAPELRQAMQDAVARIDAFHRAGMSEGYAVETAPGVVCEKIVRPIGRVGLYVPAGSAPLPSTALMLGVPARLAGCREVVLCTPPRKDGSVDPAVLVAAQLTGVRRVFKLGGAQAIAAMAYGTESVPSCDKLFGPGNSYVTEAKQQVAQSGAAAIDMPAGPSEVLVIADAGAQPAFVAADLLSQAEHGPDSQVLLLSDSDGLIDAVQVQLEVQLAQLSRADIARQALAQSRMIKVQALDEAFAISNRYAPEHLILALREPRAWLAQVEAAGSVFLGDYTPEALGDYCSGTNHVLPTSGAARAYSGVSVASFQNMVSVQAASKAGIDGIGQCALILARAEGLDAHANAVALRMGVAA</sequence>
<evidence type="ECO:0000255" key="1">
    <source>
        <dbReference type="HAMAP-Rule" id="MF_01024"/>
    </source>
</evidence>
<proteinExistence type="inferred from homology"/>
<dbReference type="EC" id="1.1.1.23" evidence="1"/>
<dbReference type="EMBL" id="AM039952">
    <property type="protein sequence ID" value="CAJ23552.1"/>
    <property type="molecule type" value="Genomic_DNA"/>
</dbReference>
<dbReference type="RefSeq" id="WP_011347185.1">
    <property type="nucleotide sequence ID" value="NZ_CP017190.1"/>
</dbReference>
<dbReference type="SMR" id="Q3BUF7"/>
<dbReference type="STRING" id="456327.BJD11_13050"/>
<dbReference type="GeneID" id="97510199"/>
<dbReference type="KEGG" id="xcv:XCV1875"/>
<dbReference type="eggNOG" id="COG0141">
    <property type="taxonomic scope" value="Bacteria"/>
</dbReference>
<dbReference type="HOGENOM" id="CLU_006732_3_0_6"/>
<dbReference type="UniPathway" id="UPA00031">
    <property type="reaction ID" value="UER00014"/>
</dbReference>
<dbReference type="Proteomes" id="UP000007069">
    <property type="component" value="Chromosome"/>
</dbReference>
<dbReference type="GO" id="GO:0005829">
    <property type="term" value="C:cytosol"/>
    <property type="evidence" value="ECO:0007669"/>
    <property type="project" value="TreeGrafter"/>
</dbReference>
<dbReference type="GO" id="GO:0004399">
    <property type="term" value="F:histidinol dehydrogenase activity"/>
    <property type="evidence" value="ECO:0007669"/>
    <property type="project" value="UniProtKB-UniRule"/>
</dbReference>
<dbReference type="GO" id="GO:0051287">
    <property type="term" value="F:NAD binding"/>
    <property type="evidence" value="ECO:0007669"/>
    <property type="project" value="InterPro"/>
</dbReference>
<dbReference type="GO" id="GO:0008270">
    <property type="term" value="F:zinc ion binding"/>
    <property type="evidence" value="ECO:0007669"/>
    <property type="project" value="UniProtKB-UniRule"/>
</dbReference>
<dbReference type="GO" id="GO:0000105">
    <property type="term" value="P:L-histidine biosynthetic process"/>
    <property type="evidence" value="ECO:0007669"/>
    <property type="project" value="UniProtKB-UniRule"/>
</dbReference>
<dbReference type="CDD" id="cd06572">
    <property type="entry name" value="Histidinol_dh"/>
    <property type="match status" value="1"/>
</dbReference>
<dbReference type="FunFam" id="3.40.50.1980:FF:000001">
    <property type="entry name" value="Histidinol dehydrogenase"/>
    <property type="match status" value="1"/>
</dbReference>
<dbReference type="Gene3D" id="1.20.5.1300">
    <property type="match status" value="1"/>
</dbReference>
<dbReference type="Gene3D" id="3.40.50.1980">
    <property type="entry name" value="Nitrogenase molybdenum iron protein domain"/>
    <property type="match status" value="2"/>
</dbReference>
<dbReference type="HAMAP" id="MF_01024">
    <property type="entry name" value="HisD"/>
    <property type="match status" value="1"/>
</dbReference>
<dbReference type="InterPro" id="IPR016161">
    <property type="entry name" value="Ald_DH/histidinol_DH"/>
</dbReference>
<dbReference type="InterPro" id="IPR001692">
    <property type="entry name" value="Histidinol_DH_CS"/>
</dbReference>
<dbReference type="InterPro" id="IPR022695">
    <property type="entry name" value="Histidinol_DH_monofunct"/>
</dbReference>
<dbReference type="InterPro" id="IPR012131">
    <property type="entry name" value="Hstdl_DH"/>
</dbReference>
<dbReference type="NCBIfam" id="TIGR00069">
    <property type="entry name" value="hisD"/>
    <property type="match status" value="1"/>
</dbReference>
<dbReference type="PANTHER" id="PTHR21256:SF2">
    <property type="entry name" value="HISTIDINE BIOSYNTHESIS TRIFUNCTIONAL PROTEIN"/>
    <property type="match status" value="1"/>
</dbReference>
<dbReference type="PANTHER" id="PTHR21256">
    <property type="entry name" value="HISTIDINOL DEHYDROGENASE HDH"/>
    <property type="match status" value="1"/>
</dbReference>
<dbReference type="Pfam" id="PF00815">
    <property type="entry name" value="Histidinol_dh"/>
    <property type="match status" value="1"/>
</dbReference>
<dbReference type="PIRSF" id="PIRSF000099">
    <property type="entry name" value="Histidinol_dh"/>
    <property type="match status" value="1"/>
</dbReference>
<dbReference type="PRINTS" id="PR00083">
    <property type="entry name" value="HOLDHDRGNASE"/>
</dbReference>
<dbReference type="SUPFAM" id="SSF53720">
    <property type="entry name" value="ALDH-like"/>
    <property type="match status" value="1"/>
</dbReference>
<dbReference type="PROSITE" id="PS00611">
    <property type="entry name" value="HISOL_DEHYDROGENASE"/>
    <property type="match status" value="1"/>
</dbReference>
<reference key="1">
    <citation type="journal article" date="2005" name="J. Bacteriol.">
        <title>Insights into genome plasticity and pathogenicity of the plant pathogenic Bacterium Xanthomonas campestris pv. vesicatoria revealed by the complete genome sequence.</title>
        <authorList>
            <person name="Thieme F."/>
            <person name="Koebnik R."/>
            <person name="Bekel T."/>
            <person name="Berger C."/>
            <person name="Boch J."/>
            <person name="Buettner D."/>
            <person name="Caldana C."/>
            <person name="Gaigalat L."/>
            <person name="Goesmann A."/>
            <person name="Kay S."/>
            <person name="Kirchner O."/>
            <person name="Lanz C."/>
            <person name="Linke B."/>
            <person name="McHardy A.C."/>
            <person name="Meyer F."/>
            <person name="Mittenhuber G."/>
            <person name="Nies D.H."/>
            <person name="Niesbach-Kloesgen U."/>
            <person name="Patschkowski T."/>
            <person name="Rueckert C."/>
            <person name="Rupp O."/>
            <person name="Schneiker S."/>
            <person name="Schuster S.C."/>
            <person name="Vorhoelter F.J."/>
            <person name="Weber E."/>
            <person name="Puehler A."/>
            <person name="Bonas U."/>
            <person name="Bartels D."/>
            <person name="Kaiser O."/>
        </authorList>
    </citation>
    <scope>NUCLEOTIDE SEQUENCE [LARGE SCALE GENOMIC DNA]</scope>
    <source>
        <strain>85-10</strain>
    </source>
</reference>
<feature type="chain" id="PRO_0000135883" description="Histidinol dehydrogenase">
    <location>
        <begin position="1"/>
        <end position="431"/>
    </location>
</feature>
<feature type="active site" description="Proton acceptor" evidence="1">
    <location>
        <position position="326"/>
    </location>
</feature>
<feature type="active site" description="Proton acceptor" evidence="1">
    <location>
        <position position="327"/>
    </location>
</feature>
<feature type="binding site" evidence="1">
    <location>
        <position position="127"/>
    </location>
    <ligand>
        <name>NAD(+)</name>
        <dbReference type="ChEBI" id="CHEBI:57540"/>
    </ligand>
</feature>
<feature type="binding site" evidence="1">
    <location>
        <position position="189"/>
    </location>
    <ligand>
        <name>NAD(+)</name>
        <dbReference type="ChEBI" id="CHEBI:57540"/>
    </ligand>
</feature>
<feature type="binding site" evidence="1">
    <location>
        <position position="212"/>
    </location>
    <ligand>
        <name>NAD(+)</name>
        <dbReference type="ChEBI" id="CHEBI:57540"/>
    </ligand>
</feature>
<feature type="binding site" evidence="1">
    <location>
        <position position="237"/>
    </location>
    <ligand>
        <name>substrate</name>
    </ligand>
</feature>
<feature type="binding site" evidence="1">
    <location>
        <position position="259"/>
    </location>
    <ligand>
        <name>substrate</name>
    </ligand>
</feature>
<feature type="binding site" evidence="1">
    <location>
        <position position="259"/>
    </location>
    <ligand>
        <name>Zn(2+)</name>
        <dbReference type="ChEBI" id="CHEBI:29105"/>
    </ligand>
</feature>
<feature type="binding site" evidence="1">
    <location>
        <position position="262"/>
    </location>
    <ligand>
        <name>substrate</name>
    </ligand>
</feature>
<feature type="binding site" evidence="1">
    <location>
        <position position="262"/>
    </location>
    <ligand>
        <name>Zn(2+)</name>
        <dbReference type="ChEBI" id="CHEBI:29105"/>
    </ligand>
</feature>
<feature type="binding site" evidence="1">
    <location>
        <position position="327"/>
    </location>
    <ligand>
        <name>substrate</name>
    </ligand>
</feature>
<feature type="binding site" evidence="1">
    <location>
        <position position="360"/>
    </location>
    <ligand>
        <name>substrate</name>
    </ligand>
</feature>
<feature type="binding site" evidence="1">
    <location>
        <position position="360"/>
    </location>
    <ligand>
        <name>Zn(2+)</name>
        <dbReference type="ChEBI" id="CHEBI:29105"/>
    </ligand>
</feature>
<feature type="binding site" evidence="1">
    <location>
        <position position="414"/>
    </location>
    <ligand>
        <name>substrate</name>
    </ligand>
</feature>
<feature type="binding site" evidence="1">
    <location>
        <position position="419"/>
    </location>
    <ligand>
        <name>substrate</name>
    </ligand>
</feature>
<feature type="binding site" evidence="1">
    <location>
        <position position="419"/>
    </location>
    <ligand>
        <name>Zn(2+)</name>
        <dbReference type="ChEBI" id="CHEBI:29105"/>
    </ligand>
</feature>